<reference key="1">
    <citation type="journal article" date="1997" name="Nature">
        <title>The complete genome sequence of the hyperthermophilic, sulphate-reducing archaeon Archaeoglobus fulgidus.</title>
        <authorList>
            <person name="Klenk H.-P."/>
            <person name="Clayton R.A."/>
            <person name="Tomb J.-F."/>
            <person name="White O."/>
            <person name="Nelson K.E."/>
            <person name="Ketchum K.A."/>
            <person name="Dodson R.J."/>
            <person name="Gwinn M.L."/>
            <person name="Hickey E.K."/>
            <person name="Peterson J.D."/>
            <person name="Richardson D.L."/>
            <person name="Kerlavage A.R."/>
            <person name="Graham D.E."/>
            <person name="Kyrpides N.C."/>
            <person name="Fleischmann R.D."/>
            <person name="Quackenbush J."/>
            <person name="Lee N.H."/>
            <person name="Sutton G.G."/>
            <person name="Gill S.R."/>
            <person name="Kirkness E.F."/>
            <person name="Dougherty B.A."/>
            <person name="McKenney K."/>
            <person name="Adams M.D."/>
            <person name="Loftus B.J."/>
            <person name="Peterson S.N."/>
            <person name="Reich C.I."/>
            <person name="McNeil L.K."/>
            <person name="Badger J.H."/>
            <person name="Glodek A."/>
            <person name="Zhou L."/>
            <person name="Overbeek R."/>
            <person name="Gocayne J.D."/>
            <person name="Weidman J.F."/>
            <person name="McDonald L.A."/>
            <person name="Utterback T.R."/>
            <person name="Cotton M.D."/>
            <person name="Spriggs T."/>
            <person name="Artiach P."/>
            <person name="Kaine B.P."/>
            <person name="Sykes S.M."/>
            <person name="Sadow P.W."/>
            <person name="D'Andrea K.P."/>
            <person name="Bowman C."/>
            <person name="Fujii C."/>
            <person name="Garland S.A."/>
            <person name="Mason T.M."/>
            <person name="Olsen G.J."/>
            <person name="Fraser C.M."/>
            <person name="Smith H.O."/>
            <person name="Woese C.R."/>
            <person name="Venter J.C."/>
        </authorList>
    </citation>
    <scope>NUCLEOTIDE SEQUENCE [LARGE SCALE GENOMIC DNA]</scope>
    <source>
        <strain>ATCC 49558 / DSM 4304 / JCM 9628 / NBRC 100126 / VC-16</strain>
    </source>
</reference>
<dbReference type="EC" id="4.2.1.20"/>
<dbReference type="EMBL" id="AE000782">
    <property type="protein sequence ID" value="AAB89649.1"/>
    <property type="molecule type" value="Genomic_DNA"/>
</dbReference>
<dbReference type="PIR" id="G69449">
    <property type="entry name" value="G69449"/>
</dbReference>
<dbReference type="SMR" id="O28672"/>
<dbReference type="STRING" id="224325.AF_1600"/>
<dbReference type="PaxDb" id="224325-AF_1600"/>
<dbReference type="EnsemblBacteria" id="AAB89649">
    <property type="protein sequence ID" value="AAB89649"/>
    <property type="gene ID" value="AF_1600"/>
</dbReference>
<dbReference type="KEGG" id="afu:AF_1600"/>
<dbReference type="eggNOG" id="arCOG01433">
    <property type="taxonomic scope" value="Archaea"/>
</dbReference>
<dbReference type="HOGENOM" id="CLU_016734_3_1_2"/>
<dbReference type="OrthoDB" id="371827at2157"/>
<dbReference type="PhylomeDB" id="O28672"/>
<dbReference type="BRENDA" id="4.2.1.20">
    <property type="organism ID" value="414"/>
</dbReference>
<dbReference type="UniPathway" id="UPA00035">
    <property type="reaction ID" value="UER00044"/>
</dbReference>
<dbReference type="Proteomes" id="UP000002199">
    <property type="component" value="Chromosome"/>
</dbReference>
<dbReference type="GO" id="GO:0005737">
    <property type="term" value="C:cytoplasm"/>
    <property type="evidence" value="ECO:0007669"/>
    <property type="project" value="TreeGrafter"/>
</dbReference>
<dbReference type="GO" id="GO:0004834">
    <property type="term" value="F:tryptophan synthase activity"/>
    <property type="evidence" value="ECO:0007669"/>
    <property type="project" value="UniProtKB-UniRule"/>
</dbReference>
<dbReference type="CDD" id="cd06446">
    <property type="entry name" value="Trp-synth_B"/>
    <property type="match status" value="1"/>
</dbReference>
<dbReference type="FunFam" id="3.40.50.1100:FF:000001">
    <property type="entry name" value="Tryptophan synthase beta chain"/>
    <property type="match status" value="1"/>
</dbReference>
<dbReference type="FunFam" id="3.40.50.1100:FF:000004">
    <property type="entry name" value="Tryptophan synthase beta chain"/>
    <property type="match status" value="1"/>
</dbReference>
<dbReference type="Gene3D" id="3.40.50.1100">
    <property type="match status" value="2"/>
</dbReference>
<dbReference type="HAMAP" id="MF_00133">
    <property type="entry name" value="Trp_synth_beta"/>
    <property type="match status" value="1"/>
</dbReference>
<dbReference type="InterPro" id="IPR006653">
    <property type="entry name" value="Trp_synth_b_CS"/>
</dbReference>
<dbReference type="InterPro" id="IPR006654">
    <property type="entry name" value="Trp_synth_beta"/>
</dbReference>
<dbReference type="InterPro" id="IPR023026">
    <property type="entry name" value="Trp_synth_beta/beta-like"/>
</dbReference>
<dbReference type="InterPro" id="IPR001926">
    <property type="entry name" value="TrpB-like_PALP"/>
</dbReference>
<dbReference type="InterPro" id="IPR036052">
    <property type="entry name" value="TrpB-like_PALP_sf"/>
</dbReference>
<dbReference type="NCBIfam" id="TIGR00263">
    <property type="entry name" value="trpB"/>
    <property type="match status" value="1"/>
</dbReference>
<dbReference type="PANTHER" id="PTHR48077:SF3">
    <property type="entry name" value="TRYPTOPHAN SYNTHASE"/>
    <property type="match status" value="1"/>
</dbReference>
<dbReference type="PANTHER" id="PTHR48077">
    <property type="entry name" value="TRYPTOPHAN SYNTHASE-RELATED"/>
    <property type="match status" value="1"/>
</dbReference>
<dbReference type="Pfam" id="PF00291">
    <property type="entry name" value="PALP"/>
    <property type="match status" value="1"/>
</dbReference>
<dbReference type="PIRSF" id="PIRSF001413">
    <property type="entry name" value="Trp_syn_beta"/>
    <property type="match status" value="1"/>
</dbReference>
<dbReference type="SUPFAM" id="SSF53686">
    <property type="entry name" value="Tryptophan synthase beta subunit-like PLP-dependent enzymes"/>
    <property type="match status" value="1"/>
</dbReference>
<dbReference type="PROSITE" id="PS00168">
    <property type="entry name" value="TRP_SYNTHASE_BETA"/>
    <property type="match status" value="1"/>
</dbReference>
<sequence length="397" mass="43745">MRCWLENLSGGRKMKFGEFGGRFVPEVLIPPLEELEKAYDRFKDDEEFKARLEYYLKSYAGRPTPLYFAENLSRELGVKIYLKREDLLHGGAHKINNTIGQALLAKFMGKKRVIAETGAGQHGVATAMAAALLGLEAEIYMGAEDYERQKMNVFRMELLGAKVTAVESGSRTLKDAINEALRDWVESFEHTHYLIGSVVGPHPFPTIVRDFQAVIGKEARRQIIEAEGGMPDAIIACVGGGSNAMGIFHPFLNDDVRLIGVEAGGEGIESGRHSASLTAGSKGVLHGMLSYFLQDEEGMMLDTHSVSAGLDYPGVGPEHAYLKETGRCEYVTVNDEEALRAFKTLSKLEGIIPALESAHAIAYAMKMAEEMQRDDVLVVNLSGRGDKDMDIVRRRLA</sequence>
<gene>
    <name type="primary">trpB1</name>
    <name type="synonym">trpB</name>
    <name type="ordered locus">AF_1600</name>
</gene>
<organism>
    <name type="scientific">Archaeoglobus fulgidus (strain ATCC 49558 / DSM 4304 / JCM 9628 / NBRC 100126 / VC-16)</name>
    <dbReference type="NCBI Taxonomy" id="224325"/>
    <lineage>
        <taxon>Archaea</taxon>
        <taxon>Methanobacteriati</taxon>
        <taxon>Methanobacteriota</taxon>
        <taxon>Archaeoglobi</taxon>
        <taxon>Archaeoglobales</taxon>
        <taxon>Archaeoglobaceae</taxon>
        <taxon>Archaeoglobus</taxon>
    </lineage>
</organism>
<protein>
    <recommendedName>
        <fullName>Tryptophan synthase beta chain 1</fullName>
        <ecNumber>4.2.1.20</ecNumber>
    </recommendedName>
</protein>
<accession>O28672</accession>
<feature type="chain" id="PRO_0000099032" description="Tryptophan synthase beta chain 1">
    <location>
        <begin position="1"/>
        <end position="397"/>
    </location>
</feature>
<feature type="modified residue" description="N6-(pyridoxal phosphate)lysine" evidence="1">
    <location>
        <position position="94"/>
    </location>
</feature>
<keyword id="KW-0028">Amino-acid biosynthesis</keyword>
<keyword id="KW-0057">Aromatic amino acid biosynthesis</keyword>
<keyword id="KW-0456">Lyase</keyword>
<keyword id="KW-0663">Pyridoxal phosphate</keyword>
<keyword id="KW-1185">Reference proteome</keyword>
<keyword id="KW-0822">Tryptophan biosynthesis</keyword>
<evidence type="ECO:0000250" key="1"/>
<evidence type="ECO:0000305" key="2"/>
<comment type="function">
    <text evidence="1">The beta subunit is responsible for the synthesis of L-tryptophan from indole and L-serine.</text>
</comment>
<comment type="catalytic activity">
    <reaction>
        <text>(1S,2R)-1-C-(indol-3-yl)glycerol 3-phosphate + L-serine = D-glyceraldehyde 3-phosphate + L-tryptophan + H2O</text>
        <dbReference type="Rhea" id="RHEA:10532"/>
        <dbReference type="ChEBI" id="CHEBI:15377"/>
        <dbReference type="ChEBI" id="CHEBI:33384"/>
        <dbReference type="ChEBI" id="CHEBI:57912"/>
        <dbReference type="ChEBI" id="CHEBI:58866"/>
        <dbReference type="ChEBI" id="CHEBI:59776"/>
        <dbReference type="EC" id="4.2.1.20"/>
    </reaction>
</comment>
<comment type="cofactor">
    <cofactor evidence="1">
        <name>pyridoxal 5'-phosphate</name>
        <dbReference type="ChEBI" id="CHEBI:597326"/>
    </cofactor>
</comment>
<comment type="pathway">
    <text>Amino-acid biosynthesis; L-tryptophan biosynthesis; L-tryptophan from chorismate: step 5/5.</text>
</comment>
<comment type="subunit">
    <text evidence="1">Tetramer of two alpha and two beta chains.</text>
</comment>
<comment type="similarity">
    <text evidence="2">Belongs to the TrpB family.</text>
</comment>
<name>TRPB1_ARCFU</name>
<proteinExistence type="inferred from homology"/>